<proteinExistence type="inferred from homology"/>
<organism>
    <name type="scientific">Hydrogenovibrio crunogenus (strain DSM 25203 / XCL-2)</name>
    <name type="common">Thiomicrospira crunogena</name>
    <dbReference type="NCBI Taxonomy" id="317025"/>
    <lineage>
        <taxon>Bacteria</taxon>
        <taxon>Pseudomonadati</taxon>
        <taxon>Pseudomonadota</taxon>
        <taxon>Gammaproteobacteria</taxon>
        <taxon>Thiotrichales</taxon>
        <taxon>Piscirickettsiaceae</taxon>
        <taxon>Hydrogenovibrio</taxon>
    </lineage>
</organism>
<name>RL33_HYDCU</name>
<gene>
    <name evidence="1" type="primary">rpmG</name>
    <name type="ordered locus">Tcr_1919</name>
</gene>
<evidence type="ECO:0000255" key="1">
    <source>
        <dbReference type="HAMAP-Rule" id="MF_00294"/>
    </source>
</evidence>
<evidence type="ECO:0000305" key="2"/>
<sequence>MRDKIKLQSTESAYFYTTDKNKRNMAGKFEIKKYDPVLRKHVLFKEAKIK</sequence>
<comment type="similarity">
    <text evidence="1">Belongs to the bacterial ribosomal protein bL33 family.</text>
</comment>
<dbReference type="EMBL" id="CP000109">
    <property type="protein sequence ID" value="ABB42509.1"/>
    <property type="molecule type" value="Genomic_DNA"/>
</dbReference>
<dbReference type="SMR" id="Q31EB4"/>
<dbReference type="STRING" id="317025.Tcr_1919"/>
<dbReference type="KEGG" id="tcx:Tcr_1919"/>
<dbReference type="eggNOG" id="COG0267">
    <property type="taxonomic scope" value="Bacteria"/>
</dbReference>
<dbReference type="HOGENOM" id="CLU_190949_1_1_6"/>
<dbReference type="OrthoDB" id="21586at2"/>
<dbReference type="GO" id="GO:0022625">
    <property type="term" value="C:cytosolic large ribosomal subunit"/>
    <property type="evidence" value="ECO:0007669"/>
    <property type="project" value="TreeGrafter"/>
</dbReference>
<dbReference type="GO" id="GO:0003735">
    <property type="term" value="F:structural constituent of ribosome"/>
    <property type="evidence" value="ECO:0007669"/>
    <property type="project" value="InterPro"/>
</dbReference>
<dbReference type="GO" id="GO:0006412">
    <property type="term" value="P:translation"/>
    <property type="evidence" value="ECO:0007669"/>
    <property type="project" value="UniProtKB-UniRule"/>
</dbReference>
<dbReference type="Gene3D" id="2.20.28.120">
    <property type="entry name" value="Ribosomal protein L33"/>
    <property type="match status" value="1"/>
</dbReference>
<dbReference type="HAMAP" id="MF_00294">
    <property type="entry name" value="Ribosomal_bL33"/>
    <property type="match status" value="1"/>
</dbReference>
<dbReference type="InterPro" id="IPR001705">
    <property type="entry name" value="Ribosomal_bL33"/>
</dbReference>
<dbReference type="InterPro" id="IPR018264">
    <property type="entry name" value="Ribosomal_bL33_CS"/>
</dbReference>
<dbReference type="InterPro" id="IPR038584">
    <property type="entry name" value="Ribosomal_bL33_sf"/>
</dbReference>
<dbReference type="InterPro" id="IPR011332">
    <property type="entry name" value="Ribosomal_zn-bd"/>
</dbReference>
<dbReference type="NCBIfam" id="NF001860">
    <property type="entry name" value="PRK00595.1"/>
    <property type="match status" value="1"/>
</dbReference>
<dbReference type="NCBIfam" id="TIGR01023">
    <property type="entry name" value="rpmG_bact"/>
    <property type="match status" value="1"/>
</dbReference>
<dbReference type="PANTHER" id="PTHR15238">
    <property type="entry name" value="54S RIBOSOMAL PROTEIN L39, MITOCHONDRIAL"/>
    <property type="match status" value="1"/>
</dbReference>
<dbReference type="PANTHER" id="PTHR15238:SF1">
    <property type="entry name" value="LARGE RIBOSOMAL SUBUNIT PROTEIN BL33M"/>
    <property type="match status" value="1"/>
</dbReference>
<dbReference type="Pfam" id="PF00471">
    <property type="entry name" value="Ribosomal_L33"/>
    <property type="match status" value="1"/>
</dbReference>
<dbReference type="SUPFAM" id="SSF57829">
    <property type="entry name" value="Zn-binding ribosomal proteins"/>
    <property type="match status" value="1"/>
</dbReference>
<dbReference type="PROSITE" id="PS00582">
    <property type="entry name" value="RIBOSOMAL_L33"/>
    <property type="match status" value="1"/>
</dbReference>
<feature type="chain" id="PRO_0000356768" description="Large ribosomal subunit protein bL33">
    <location>
        <begin position="1"/>
        <end position="50"/>
    </location>
</feature>
<protein>
    <recommendedName>
        <fullName evidence="1">Large ribosomal subunit protein bL33</fullName>
    </recommendedName>
    <alternativeName>
        <fullName evidence="2">50S ribosomal protein L33</fullName>
    </alternativeName>
</protein>
<reference key="1">
    <citation type="journal article" date="2006" name="PLoS Biol.">
        <title>The genome of deep-sea vent chemolithoautotroph Thiomicrospira crunogena XCL-2.</title>
        <authorList>
            <person name="Scott K.M."/>
            <person name="Sievert S.M."/>
            <person name="Abril F.N."/>
            <person name="Ball L.A."/>
            <person name="Barrett C.J."/>
            <person name="Blake R.A."/>
            <person name="Boller A.J."/>
            <person name="Chain P.S.G."/>
            <person name="Clark J.A."/>
            <person name="Davis C.R."/>
            <person name="Detter C."/>
            <person name="Do K.F."/>
            <person name="Dobrinski K.P."/>
            <person name="Faza B.I."/>
            <person name="Fitzpatrick K.A."/>
            <person name="Freyermuth S.K."/>
            <person name="Harmer T.L."/>
            <person name="Hauser L.J."/>
            <person name="Huegler M."/>
            <person name="Kerfeld C.A."/>
            <person name="Klotz M.G."/>
            <person name="Kong W.W."/>
            <person name="Land M."/>
            <person name="Lapidus A."/>
            <person name="Larimer F.W."/>
            <person name="Longo D.L."/>
            <person name="Lucas S."/>
            <person name="Malfatti S.A."/>
            <person name="Massey S.E."/>
            <person name="Martin D.D."/>
            <person name="McCuddin Z."/>
            <person name="Meyer F."/>
            <person name="Moore J.L."/>
            <person name="Ocampo L.H. Jr."/>
            <person name="Paul J.H."/>
            <person name="Paulsen I.T."/>
            <person name="Reep D.K."/>
            <person name="Ren Q."/>
            <person name="Ross R.L."/>
            <person name="Sato P.Y."/>
            <person name="Thomas P."/>
            <person name="Tinkham L.E."/>
            <person name="Zeruth G.T."/>
        </authorList>
    </citation>
    <scope>NUCLEOTIDE SEQUENCE [LARGE SCALE GENOMIC DNA]</scope>
    <source>
        <strain>DSM 25203 / XCL-2</strain>
    </source>
</reference>
<accession>Q31EB4</accession>
<keyword id="KW-0687">Ribonucleoprotein</keyword>
<keyword id="KW-0689">Ribosomal protein</keyword>